<dbReference type="EMBL" id="CP000653">
    <property type="protein sequence ID" value="ABP62401.1"/>
    <property type="molecule type" value="Genomic_DNA"/>
</dbReference>
<dbReference type="RefSeq" id="WP_002919759.1">
    <property type="nucleotide sequence ID" value="NC_009436.1"/>
</dbReference>
<dbReference type="SMR" id="A4WFC1"/>
<dbReference type="STRING" id="399742.Ent638_3744"/>
<dbReference type="GeneID" id="97603662"/>
<dbReference type="KEGG" id="ent:Ent638_3744"/>
<dbReference type="eggNOG" id="COG0197">
    <property type="taxonomic scope" value="Bacteria"/>
</dbReference>
<dbReference type="HOGENOM" id="CLU_078858_2_1_6"/>
<dbReference type="OrthoDB" id="9802589at2"/>
<dbReference type="Proteomes" id="UP000000230">
    <property type="component" value="Chromosome"/>
</dbReference>
<dbReference type="GO" id="GO:0022625">
    <property type="term" value="C:cytosolic large ribosomal subunit"/>
    <property type="evidence" value="ECO:0007669"/>
    <property type="project" value="TreeGrafter"/>
</dbReference>
<dbReference type="GO" id="GO:0019843">
    <property type="term" value="F:rRNA binding"/>
    <property type="evidence" value="ECO:0007669"/>
    <property type="project" value="UniProtKB-UniRule"/>
</dbReference>
<dbReference type="GO" id="GO:0003735">
    <property type="term" value="F:structural constituent of ribosome"/>
    <property type="evidence" value="ECO:0007669"/>
    <property type="project" value="InterPro"/>
</dbReference>
<dbReference type="GO" id="GO:0000049">
    <property type="term" value="F:tRNA binding"/>
    <property type="evidence" value="ECO:0007669"/>
    <property type="project" value="UniProtKB-KW"/>
</dbReference>
<dbReference type="GO" id="GO:0006412">
    <property type="term" value="P:translation"/>
    <property type="evidence" value="ECO:0007669"/>
    <property type="project" value="UniProtKB-UniRule"/>
</dbReference>
<dbReference type="CDD" id="cd01433">
    <property type="entry name" value="Ribosomal_L16_L10e"/>
    <property type="match status" value="1"/>
</dbReference>
<dbReference type="FunFam" id="3.90.1170.10:FF:000001">
    <property type="entry name" value="50S ribosomal protein L16"/>
    <property type="match status" value="1"/>
</dbReference>
<dbReference type="Gene3D" id="3.90.1170.10">
    <property type="entry name" value="Ribosomal protein L10e/L16"/>
    <property type="match status" value="1"/>
</dbReference>
<dbReference type="HAMAP" id="MF_01342">
    <property type="entry name" value="Ribosomal_uL16"/>
    <property type="match status" value="1"/>
</dbReference>
<dbReference type="InterPro" id="IPR047873">
    <property type="entry name" value="Ribosomal_uL16"/>
</dbReference>
<dbReference type="InterPro" id="IPR000114">
    <property type="entry name" value="Ribosomal_uL16_bact-type"/>
</dbReference>
<dbReference type="InterPro" id="IPR020798">
    <property type="entry name" value="Ribosomal_uL16_CS"/>
</dbReference>
<dbReference type="InterPro" id="IPR016180">
    <property type="entry name" value="Ribosomal_uL16_dom"/>
</dbReference>
<dbReference type="InterPro" id="IPR036920">
    <property type="entry name" value="Ribosomal_uL16_sf"/>
</dbReference>
<dbReference type="NCBIfam" id="TIGR01164">
    <property type="entry name" value="rplP_bact"/>
    <property type="match status" value="1"/>
</dbReference>
<dbReference type="PANTHER" id="PTHR12220">
    <property type="entry name" value="50S/60S RIBOSOMAL PROTEIN L16"/>
    <property type="match status" value="1"/>
</dbReference>
<dbReference type="PANTHER" id="PTHR12220:SF13">
    <property type="entry name" value="LARGE RIBOSOMAL SUBUNIT PROTEIN UL16M"/>
    <property type="match status" value="1"/>
</dbReference>
<dbReference type="Pfam" id="PF00252">
    <property type="entry name" value="Ribosomal_L16"/>
    <property type="match status" value="1"/>
</dbReference>
<dbReference type="PRINTS" id="PR00060">
    <property type="entry name" value="RIBOSOMALL16"/>
</dbReference>
<dbReference type="SUPFAM" id="SSF54686">
    <property type="entry name" value="Ribosomal protein L16p/L10e"/>
    <property type="match status" value="1"/>
</dbReference>
<dbReference type="PROSITE" id="PS00586">
    <property type="entry name" value="RIBOSOMAL_L16_1"/>
    <property type="match status" value="1"/>
</dbReference>
<dbReference type="PROSITE" id="PS00701">
    <property type="entry name" value="RIBOSOMAL_L16_2"/>
    <property type="match status" value="1"/>
</dbReference>
<sequence length="136" mass="15250">MLQPKRTKFRKVHKGRNRGLAQGTDVSFGTFGLKAVGRGRLTARQIEAARRAMTRAVKRQGKIWIRVFPDKPITEKPLEVRMGKGKGNVEYWVALIQPGKVLYEMDGVPEELAREAFGLAAAKLPIKTTFVTKTVM</sequence>
<evidence type="ECO:0000255" key="1">
    <source>
        <dbReference type="HAMAP-Rule" id="MF_01342"/>
    </source>
</evidence>
<evidence type="ECO:0000305" key="2"/>
<protein>
    <recommendedName>
        <fullName evidence="1">Large ribosomal subunit protein uL16</fullName>
    </recommendedName>
    <alternativeName>
        <fullName evidence="2">50S ribosomal protein L16</fullName>
    </alternativeName>
</protein>
<proteinExistence type="inferred from homology"/>
<keyword id="KW-0687">Ribonucleoprotein</keyword>
<keyword id="KW-0689">Ribosomal protein</keyword>
<keyword id="KW-0694">RNA-binding</keyword>
<keyword id="KW-0699">rRNA-binding</keyword>
<keyword id="KW-0820">tRNA-binding</keyword>
<reference key="1">
    <citation type="journal article" date="2010" name="PLoS Genet.">
        <title>Genome sequence of the plant growth promoting endophytic bacterium Enterobacter sp. 638.</title>
        <authorList>
            <person name="Taghavi S."/>
            <person name="van der Lelie D."/>
            <person name="Hoffman A."/>
            <person name="Zhang Y.B."/>
            <person name="Walla M.D."/>
            <person name="Vangronsveld J."/>
            <person name="Newman L."/>
            <person name="Monchy S."/>
        </authorList>
    </citation>
    <scope>NUCLEOTIDE SEQUENCE [LARGE SCALE GENOMIC DNA]</scope>
    <source>
        <strain>638</strain>
    </source>
</reference>
<organism>
    <name type="scientific">Enterobacter sp. (strain 638)</name>
    <dbReference type="NCBI Taxonomy" id="399742"/>
    <lineage>
        <taxon>Bacteria</taxon>
        <taxon>Pseudomonadati</taxon>
        <taxon>Pseudomonadota</taxon>
        <taxon>Gammaproteobacteria</taxon>
        <taxon>Enterobacterales</taxon>
        <taxon>Enterobacteriaceae</taxon>
        <taxon>Enterobacter</taxon>
    </lineage>
</organism>
<name>RL16_ENT38</name>
<feature type="chain" id="PRO_1000067678" description="Large ribosomal subunit protein uL16">
    <location>
        <begin position="1"/>
        <end position="136"/>
    </location>
</feature>
<accession>A4WFC1</accession>
<gene>
    <name evidence="1" type="primary">rplP</name>
    <name type="ordered locus">Ent638_3744</name>
</gene>
<comment type="function">
    <text evidence="1">Binds 23S rRNA and is also seen to make contacts with the A and possibly P site tRNAs.</text>
</comment>
<comment type="subunit">
    <text evidence="1">Part of the 50S ribosomal subunit.</text>
</comment>
<comment type="similarity">
    <text evidence="1">Belongs to the universal ribosomal protein uL16 family.</text>
</comment>